<reference key="1">
    <citation type="submission" date="2005-10" db="EMBL/GenBank/DDBJ databases">
        <title>Complete sequence of Pelobacter carbinolicus DSM 2380.</title>
        <authorList>
            <person name="Copeland A."/>
            <person name="Lucas S."/>
            <person name="Lapidus A."/>
            <person name="Barry K."/>
            <person name="Detter J.C."/>
            <person name="Glavina T."/>
            <person name="Hammon N."/>
            <person name="Israni S."/>
            <person name="Pitluck S."/>
            <person name="Chertkov O."/>
            <person name="Schmutz J."/>
            <person name="Larimer F."/>
            <person name="Land M."/>
            <person name="Kyrpides N."/>
            <person name="Ivanova N."/>
            <person name="Richardson P."/>
        </authorList>
    </citation>
    <scope>NUCLEOTIDE SEQUENCE [LARGE SCALE GENOMIC DNA]</scope>
    <source>
        <strain>DSM 2380 / NBRC 103641 / GraBd1</strain>
    </source>
</reference>
<gene>
    <name evidence="1" type="primary">deoC</name>
    <name type="ordered locus">Pcar_2321</name>
</gene>
<evidence type="ECO:0000255" key="1">
    <source>
        <dbReference type="HAMAP-Rule" id="MF_00114"/>
    </source>
</evidence>
<accession>Q3A247</accession>
<name>DEOC_SYNC1</name>
<feature type="chain" id="PRO_0000231558" description="Deoxyribose-phosphate aldolase">
    <location>
        <begin position="1"/>
        <end position="221"/>
    </location>
</feature>
<feature type="active site" description="Proton donor/acceptor" evidence="1">
    <location>
        <position position="90"/>
    </location>
</feature>
<feature type="active site" description="Schiff-base intermediate with acetaldehyde" evidence="1">
    <location>
        <position position="152"/>
    </location>
</feature>
<feature type="active site" description="Proton donor/acceptor" evidence="1">
    <location>
        <position position="181"/>
    </location>
</feature>
<comment type="function">
    <text evidence="1">Catalyzes a reversible aldol reaction between acetaldehyde and D-glyceraldehyde 3-phosphate to generate 2-deoxy-D-ribose 5-phosphate.</text>
</comment>
<comment type="catalytic activity">
    <reaction evidence="1">
        <text>2-deoxy-D-ribose 5-phosphate = D-glyceraldehyde 3-phosphate + acetaldehyde</text>
        <dbReference type="Rhea" id="RHEA:12821"/>
        <dbReference type="ChEBI" id="CHEBI:15343"/>
        <dbReference type="ChEBI" id="CHEBI:59776"/>
        <dbReference type="ChEBI" id="CHEBI:62877"/>
        <dbReference type="EC" id="4.1.2.4"/>
    </reaction>
</comment>
<comment type="pathway">
    <text evidence="1">Carbohydrate degradation; 2-deoxy-D-ribose 1-phosphate degradation; D-glyceraldehyde 3-phosphate and acetaldehyde from 2-deoxy-alpha-D-ribose 1-phosphate: step 2/2.</text>
</comment>
<comment type="subcellular location">
    <subcellularLocation>
        <location evidence="1">Cytoplasm</location>
    </subcellularLocation>
</comment>
<comment type="similarity">
    <text evidence="1">Belongs to the DeoC/FbaB aldolase family. DeoC type 1 subfamily.</text>
</comment>
<dbReference type="EC" id="4.1.2.4" evidence="1"/>
<dbReference type="EMBL" id="CP000142">
    <property type="protein sequence ID" value="ABA89560.1"/>
    <property type="molecule type" value="Genomic_DNA"/>
</dbReference>
<dbReference type="RefSeq" id="WP_011342082.1">
    <property type="nucleotide sequence ID" value="NC_007498.2"/>
</dbReference>
<dbReference type="SMR" id="Q3A247"/>
<dbReference type="STRING" id="338963.Pcar_2321"/>
<dbReference type="KEGG" id="pca:Pcar_2321"/>
<dbReference type="eggNOG" id="COG0274">
    <property type="taxonomic scope" value="Bacteria"/>
</dbReference>
<dbReference type="HOGENOM" id="CLU_053595_0_2_7"/>
<dbReference type="OrthoDB" id="9774832at2"/>
<dbReference type="UniPathway" id="UPA00002">
    <property type="reaction ID" value="UER00468"/>
</dbReference>
<dbReference type="Proteomes" id="UP000002534">
    <property type="component" value="Chromosome"/>
</dbReference>
<dbReference type="GO" id="GO:0005737">
    <property type="term" value="C:cytoplasm"/>
    <property type="evidence" value="ECO:0007669"/>
    <property type="project" value="UniProtKB-SubCell"/>
</dbReference>
<dbReference type="GO" id="GO:0004139">
    <property type="term" value="F:deoxyribose-phosphate aldolase activity"/>
    <property type="evidence" value="ECO:0007669"/>
    <property type="project" value="UniProtKB-UniRule"/>
</dbReference>
<dbReference type="GO" id="GO:0006018">
    <property type="term" value="P:2-deoxyribose 1-phosphate catabolic process"/>
    <property type="evidence" value="ECO:0007669"/>
    <property type="project" value="UniProtKB-UniRule"/>
</dbReference>
<dbReference type="GO" id="GO:0016052">
    <property type="term" value="P:carbohydrate catabolic process"/>
    <property type="evidence" value="ECO:0007669"/>
    <property type="project" value="TreeGrafter"/>
</dbReference>
<dbReference type="GO" id="GO:0009264">
    <property type="term" value="P:deoxyribonucleotide catabolic process"/>
    <property type="evidence" value="ECO:0007669"/>
    <property type="project" value="InterPro"/>
</dbReference>
<dbReference type="CDD" id="cd00959">
    <property type="entry name" value="DeoC"/>
    <property type="match status" value="1"/>
</dbReference>
<dbReference type="FunFam" id="3.20.20.70:FF:000044">
    <property type="entry name" value="Deoxyribose-phosphate aldolase"/>
    <property type="match status" value="1"/>
</dbReference>
<dbReference type="Gene3D" id="3.20.20.70">
    <property type="entry name" value="Aldolase class I"/>
    <property type="match status" value="1"/>
</dbReference>
<dbReference type="HAMAP" id="MF_00114">
    <property type="entry name" value="DeoC_type1"/>
    <property type="match status" value="1"/>
</dbReference>
<dbReference type="InterPro" id="IPR013785">
    <property type="entry name" value="Aldolase_TIM"/>
</dbReference>
<dbReference type="InterPro" id="IPR011343">
    <property type="entry name" value="DeoC"/>
</dbReference>
<dbReference type="InterPro" id="IPR002915">
    <property type="entry name" value="DeoC/FbaB/LacD_aldolase"/>
</dbReference>
<dbReference type="InterPro" id="IPR028581">
    <property type="entry name" value="DeoC_typeI"/>
</dbReference>
<dbReference type="NCBIfam" id="TIGR00126">
    <property type="entry name" value="deoC"/>
    <property type="match status" value="1"/>
</dbReference>
<dbReference type="PANTHER" id="PTHR10889">
    <property type="entry name" value="DEOXYRIBOSE-PHOSPHATE ALDOLASE"/>
    <property type="match status" value="1"/>
</dbReference>
<dbReference type="PANTHER" id="PTHR10889:SF1">
    <property type="entry name" value="DEOXYRIBOSE-PHOSPHATE ALDOLASE"/>
    <property type="match status" value="1"/>
</dbReference>
<dbReference type="Pfam" id="PF01791">
    <property type="entry name" value="DeoC"/>
    <property type="match status" value="1"/>
</dbReference>
<dbReference type="PIRSF" id="PIRSF001357">
    <property type="entry name" value="DeoC"/>
    <property type="match status" value="1"/>
</dbReference>
<dbReference type="SMART" id="SM01133">
    <property type="entry name" value="DeoC"/>
    <property type="match status" value="1"/>
</dbReference>
<dbReference type="SUPFAM" id="SSF51569">
    <property type="entry name" value="Aldolase"/>
    <property type="match status" value="1"/>
</dbReference>
<sequence length="221" mass="23380">MKSPAPYIDHTLLKADATSAQIRQLCLEAAHWQFASVCIPPRFVSEAVACLADSQVAVGTVVGFPLGYDTAAVKRAATAQAVAEGVDEIDMVIPLGAALEGRLDMVREDVIGVLDAAAGRLVKVIIECCYLENARKVELVELLAEAGADYVKTSTGFAVSGAAEADIRLLHQAAGGRIKVKAAGGVRDWETCRIMLKAGAHRVGTSNGVQIIQQWQEAPEL</sequence>
<keyword id="KW-0963">Cytoplasm</keyword>
<keyword id="KW-0456">Lyase</keyword>
<keyword id="KW-1185">Reference proteome</keyword>
<keyword id="KW-0704">Schiff base</keyword>
<organism>
    <name type="scientific">Syntrophotalea carbinolica (strain DSM 2380 / NBRC 103641 / GraBd1)</name>
    <name type="common">Pelobacter carbinolicus</name>
    <dbReference type="NCBI Taxonomy" id="338963"/>
    <lineage>
        <taxon>Bacteria</taxon>
        <taxon>Pseudomonadati</taxon>
        <taxon>Thermodesulfobacteriota</taxon>
        <taxon>Desulfuromonadia</taxon>
        <taxon>Desulfuromonadales</taxon>
        <taxon>Syntrophotaleaceae</taxon>
        <taxon>Syntrophotalea</taxon>
    </lineage>
</organism>
<protein>
    <recommendedName>
        <fullName evidence="1">Deoxyribose-phosphate aldolase</fullName>
        <shortName evidence="1">DERA</shortName>
        <ecNumber evidence="1">4.1.2.4</ecNumber>
    </recommendedName>
    <alternativeName>
        <fullName evidence="1">2-deoxy-D-ribose 5-phosphate aldolase</fullName>
    </alternativeName>
    <alternativeName>
        <fullName evidence="1">Phosphodeoxyriboaldolase</fullName>
        <shortName evidence="1">Deoxyriboaldolase</shortName>
    </alternativeName>
</protein>
<proteinExistence type="inferred from homology"/>